<evidence type="ECO:0000255" key="1">
    <source>
        <dbReference type="HAMAP-Rule" id="MF_00176"/>
    </source>
</evidence>
<proteinExistence type="inferred from homology"/>
<accession>A8EZY3</accession>
<sequence length="425" mass="48676">MLNIKWIRENQELFDEKLSQRFIEPMSSKIAMLDEEKRKITSLIQEFQHARRVKSKILGNMTSKSSEEFEGLQRDVKHINEKLEELEKDLNNNNELNELLNMLPNIPDDEVPYGIDESMNKLVRTYGEINPNALNKQHFELGTKLNLMDFEQTTKISGARFVTLKGDLAKLERALINFMIDVHTKEFDFFEISPPVLVRDNAMYNAGQLPKFTEESFATTKGYRLIPTAEVSLVNIVADTIISREKLPMRYVAYTQCFRSEAGSSGRDTRGMIRLHQFGKVELVSITTPEESQNEHEYITNASETILQKLNLPYRIMLLCTGDMGFAAKKTYDIEVWLPGQKQYREIASCSNCGDFQARRMKARYKEFGSNDTTLVHTLNASGLPIGRTMVAILESYQNEDGSITIPDVLINYMGGLQKITTYSE</sequence>
<reference key="1">
    <citation type="submission" date="2007-09" db="EMBL/GenBank/DDBJ databases">
        <title>Complete genome sequence of Rickettsia canadensis.</title>
        <authorList>
            <person name="Madan A."/>
            <person name="Fahey J."/>
            <person name="Helton E."/>
            <person name="Ketteman M."/>
            <person name="Madan A."/>
            <person name="Rodrigues S."/>
            <person name="Sanchez A."/>
            <person name="Whiting M."/>
            <person name="Dasch G."/>
            <person name="Eremeeva M."/>
        </authorList>
    </citation>
    <scope>NUCLEOTIDE SEQUENCE [LARGE SCALE GENOMIC DNA]</scope>
    <source>
        <strain>McKiel</strain>
    </source>
</reference>
<dbReference type="EC" id="6.1.1.11" evidence="1"/>
<dbReference type="EMBL" id="CP000409">
    <property type="protein sequence ID" value="ABV73916.1"/>
    <property type="molecule type" value="Genomic_DNA"/>
</dbReference>
<dbReference type="RefSeq" id="WP_012149111.1">
    <property type="nucleotide sequence ID" value="NC_009879.1"/>
</dbReference>
<dbReference type="SMR" id="A8EZY3"/>
<dbReference type="STRING" id="293613.A1E_05000"/>
<dbReference type="KEGG" id="rcm:A1E_05000"/>
<dbReference type="eggNOG" id="COG0172">
    <property type="taxonomic scope" value="Bacteria"/>
</dbReference>
<dbReference type="HOGENOM" id="CLU_023797_1_1_5"/>
<dbReference type="UniPathway" id="UPA00906">
    <property type="reaction ID" value="UER00895"/>
</dbReference>
<dbReference type="Proteomes" id="UP000007056">
    <property type="component" value="Chromosome"/>
</dbReference>
<dbReference type="GO" id="GO:0005737">
    <property type="term" value="C:cytoplasm"/>
    <property type="evidence" value="ECO:0007669"/>
    <property type="project" value="UniProtKB-SubCell"/>
</dbReference>
<dbReference type="GO" id="GO:0005524">
    <property type="term" value="F:ATP binding"/>
    <property type="evidence" value="ECO:0007669"/>
    <property type="project" value="UniProtKB-UniRule"/>
</dbReference>
<dbReference type="GO" id="GO:0004828">
    <property type="term" value="F:serine-tRNA ligase activity"/>
    <property type="evidence" value="ECO:0007669"/>
    <property type="project" value="UniProtKB-UniRule"/>
</dbReference>
<dbReference type="GO" id="GO:0016260">
    <property type="term" value="P:selenocysteine biosynthetic process"/>
    <property type="evidence" value="ECO:0007669"/>
    <property type="project" value="UniProtKB-UniRule"/>
</dbReference>
<dbReference type="GO" id="GO:0006434">
    <property type="term" value="P:seryl-tRNA aminoacylation"/>
    <property type="evidence" value="ECO:0007669"/>
    <property type="project" value="UniProtKB-UniRule"/>
</dbReference>
<dbReference type="CDD" id="cd00770">
    <property type="entry name" value="SerRS_core"/>
    <property type="match status" value="1"/>
</dbReference>
<dbReference type="Gene3D" id="3.30.930.10">
    <property type="entry name" value="Bira Bifunctional Protein, Domain 2"/>
    <property type="match status" value="1"/>
</dbReference>
<dbReference type="Gene3D" id="1.10.287.40">
    <property type="entry name" value="Serine-tRNA synthetase, tRNA binding domain"/>
    <property type="match status" value="1"/>
</dbReference>
<dbReference type="HAMAP" id="MF_00176">
    <property type="entry name" value="Ser_tRNA_synth_type1"/>
    <property type="match status" value="1"/>
</dbReference>
<dbReference type="InterPro" id="IPR002314">
    <property type="entry name" value="aa-tRNA-synt_IIb"/>
</dbReference>
<dbReference type="InterPro" id="IPR006195">
    <property type="entry name" value="aa-tRNA-synth_II"/>
</dbReference>
<dbReference type="InterPro" id="IPR045864">
    <property type="entry name" value="aa-tRNA-synth_II/BPL/LPL"/>
</dbReference>
<dbReference type="InterPro" id="IPR002317">
    <property type="entry name" value="Ser-tRNA-ligase_type_1"/>
</dbReference>
<dbReference type="InterPro" id="IPR015866">
    <property type="entry name" value="Ser-tRNA-synth_1_N"/>
</dbReference>
<dbReference type="InterPro" id="IPR042103">
    <property type="entry name" value="SerRS_1_N_sf"/>
</dbReference>
<dbReference type="InterPro" id="IPR033729">
    <property type="entry name" value="SerRS_core"/>
</dbReference>
<dbReference type="InterPro" id="IPR010978">
    <property type="entry name" value="tRNA-bd_arm"/>
</dbReference>
<dbReference type="NCBIfam" id="TIGR00414">
    <property type="entry name" value="serS"/>
    <property type="match status" value="1"/>
</dbReference>
<dbReference type="PANTHER" id="PTHR43697:SF1">
    <property type="entry name" value="SERINE--TRNA LIGASE"/>
    <property type="match status" value="1"/>
</dbReference>
<dbReference type="PANTHER" id="PTHR43697">
    <property type="entry name" value="SERYL-TRNA SYNTHETASE"/>
    <property type="match status" value="1"/>
</dbReference>
<dbReference type="Pfam" id="PF02403">
    <property type="entry name" value="Seryl_tRNA_N"/>
    <property type="match status" value="1"/>
</dbReference>
<dbReference type="Pfam" id="PF00587">
    <property type="entry name" value="tRNA-synt_2b"/>
    <property type="match status" value="1"/>
</dbReference>
<dbReference type="PIRSF" id="PIRSF001529">
    <property type="entry name" value="Ser-tRNA-synth_IIa"/>
    <property type="match status" value="1"/>
</dbReference>
<dbReference type="PRINTS" id="PR00981">
    <property type="entry name" value="TRNASYNTHSER"/>
</dbReference>
<dbReference type="SUPFAM" id="SSF55681">
    <property type="entry name" value="Class II aaRS and biotin synthetases"/>
    <property type="match status" value="1"/>
</dbReference>
<dbReference type="SUPFAM" id="SSF46589">
    <property type="entry name" value="tRNA-binding arm"/>
    <property type="match status" value="1"/>
</dbReference>
<dbReference type="PROSITE" id="PS50862">
    <property type="entry name" value="AA_TRNA_LIGASE_II"/>
    <property type="match status" value="1"/>
</dbReference>
<feature type="chain" id="PRO_1000019800" description="Serine--tRNA ligase">
    <location>
        <begin position="1"/>
        <end position="425"/>
    </location>
</feature>
<feature type="binding site" evidence="1">
    <location>
        <begin position="228"/>
        <end position="230"/>
    </location>
    <ligand>
        <name>L-serine</name>
        <dbReference type="ChEBI" id="CHEBI:33384"/>
    </ligand>
</feature>
<feature type="binding site" evidence="1">
    <location>
        <begin position="259"/>
        <end position="261"/>
    </location>
    <ligand>
        <name>ATP</name>
        <dbReference type="ChEBI" id="CHEBI:30616"/>
    </ligand>
</feature>
<feature type="binding site" evidence="1">
    <location>
        <position position="282"/>
    </location>
    <ligand>
        <name>L-serine</name>
        <dbReference type="ChEBI" id="CHEBI:33384"/>
    </ligand>
</feature>
<feature type="binding site" evidence="1">
    <location>
        <begin position="346"/>
        <end position="349"/>
    </location>
    <ligand>
        <name>ATP</name>
        <dbReference type="ChEBI" id="CHEBI:30616"/>
    </ligand>
</feature>
<feature type="binding site" evidence="1">
    <location>
        <position position="382"/>
    </location>
    <ligand>
        <name>L-serine</name>
        <dbReference type="ChEBI" id="CHEBI:33384"/>
    </ligand>
</feature>
<name>SYS_RICCK</name>
<gene>
    <name evidence="1" type="primary">serS</name>
    <name type="ordered locus">A1E_05000</name>
</gene>
<protein>
    <recommendedName>
        <fullName evidence="1">Serine--tRNA ligase</fullName>
        <ecNumber evidence="1">6.1.1.11</ecNumber>
    </recommendedName>
    <alternativeName>
        <fullName evidence="1">Seryl-tRNA synthetase</fullName>
        <shortName evidence="1">SerRS</shortName>
    </alternativeName>
    <alternativeName>
        <fullName evidence="1">Seryl-tRNA(Ser/Sec) synthetase</fullName>
    </alternativeName>
</protein>
<organism>
    <name type="scientific">Rickettsia canadensis (strain McKiel)</name>
    <dbReference type="NCBI Taxonomy" id="293613"/>
    <lineage>
        <taxon>Bacteria</taxon>
        <taxon>Pseudomonadati</taxon>
        <taxon>Pseudomonadota</taxon>
        <taxon>Alphaproteobacteria</taxon>
        <taxon>Rickettsiales</taxon>
        <taxon>Rickettsiaceae</taxon>
        <taxon>Rickettsieae</taxon>
        <taxon>Rickettsia</taxon>
        <taxon>belli group</taxon>
    </lineage>
</organism>
<keyword id="KW-0030">Aminoacyl-tRNA synthetase</keyword>
<keyword id="KW-0067">ATP-binding</keyword>
<keyword id="KW-0963">Cytoplasm</keyword>
<keyword id="KW-0436">Ligase</keyword>
<keyword id="KW-0547">Nucleotide-binding</keyword>
<keyword id="KW-0648">Protein biosynthesis</keyword>
<comment type="function">
    <text evidence="1">Catalyzes the attachment of serine to tRNA(Ser). Is also able to aminoacylate tRNA(Sec) with serine, to form the misacylated tRNA L-seryl-tRNA(Sec), which will be further converted into selenocysteinyl-tRNA(Sec).</text>
</comment>
<comment type="catalytic activity">
    <reaction evidence="1">
        <text>tRNA(Ser) + L-serine + ATP = L-seryl-tRNA(Ser) + AMP + diphosphate + H(+)</text>
        <dbReference type="Rhea" id="RHEA:12292"/>
        <dbReference type="Rhea" id="RHEA-COMP:9669"/>
        <dbReference type="Rhea" id="RHEA-COMP:9703"/>
        <dbReference type="ChEBI" id="CHEBI:15378"/>
        <dbReference type="ChEBI" id="CHEBI:30616"/>
        <dbReference type="ChEBI" id="CHEBI:33019"/>
        <dbReference type="ChEBI" id="CHEBI:33384"/>
        <dbReference type="ChEBI" id="CHEBI:78442"/>
        <dbReference type="ChEBI" id="CHEBI:78533"/>
        <dbReference type="ChEBI" id="CHEBI:456215"/>
        <dbReference type="EC" id="6.1.1.11"/>
    </reaction>
</comment>
<comment type="catalytic activity">
    <reaction evidence="1">
        <text>tRNA(Sec) + L-serine + ATP = L-seryl-tRNA(Sec) + AMP + diphosphate + H(+)</text>
        <dbReference type="Rhea" id="RHEA:42580"/>
        <dbReference type="Rhea" id="RHEA-COMP:9742"/>
        <dbReference type="Rhea" id="RHEA-COMP:10128"/>
        <dbReference type="ChEBI" id="CHEBI:15378"/>
        <dbReference type="ChEBI" id="CHEBI:30616"/>
        <dbReference type="ChEBI" id="CHEBI:33019"/>
        <dbReference type="ChEBI" id="CHEBI:33384"/>
        <dbReference type="ChEBI" id="CHEBI:78442"/>
        <dbReference type="ChEBI" id="CHEBI:78533"/>
        <dbReference type="ChEBI" id="CHEBI:456215"/>
        <dbReference type="EC" id="6.1.1.11"/>
    </reaction>
</comment>
<comment type="pathway">
    <text evidence="1">Aminoacyl-tRNA biosynthesis; selenocysteinyl-tRNA(Sec) biosynthesis; L-seryl-tRNA(Sec) from L-serine and tRNA(Sec): step 1/1.</text>
</comment>
<comment type="subunit">
    <text evidence="1">Homodimer. The tRNA molecule binds across the dimer.</text>
</comment>
<comment type="subcellular location">
    <subcellularLocation>
        <location evidence="1">Cytoplasm</location>
    </subcellularLocation>
</comment>
<comment type="domain">
    <text evidence="1">Consists of two distinct domains, a catalytic core and a N-terminal extension that is involved in tRNA binding.</text>
</comment>
<comment type="similarity">
    <text evidence="1">Belongs to the class-II aminoacyl-tRNA synthetase family. Type-1 seryl-tRNA synthetase subfamily.</text>
</comment>